<name>LGUL_CICAR</name>
<proteinExistence type="evidence at transcript level"/>
<sequence>MAASESKESPANNPGLHTTIDEATKGYFMQQTMFRIKDPKVSLDFYSRVLGMSLLKRLDFPEMKFSLYFMGYEDTTEAPSNPVDRTVWTFAQKATIELTHNWGTESDPEFKGYHNGNSDPRGFGHIGITVDDTYKACERFQNLGVEFVKKPDDGKMKGIAFIKDPDGYWIELFDRKTIGNVTEGNA</sequence>
<organism>
    <name type="scientific">Cicer arietinum</name>
    <name type="common">Chickpea</name>
    <name type="synonym">Garbanzo</name>
    <dbReference type="NCBI Taxonomy" id="3827"/>
    <lineage>
        <taxon>Eukaryota</taxon>
        <taxon>Viridiplantae</taxon>
        <taxon>Streptophyta</taxon>
        <taxon>Embryophyta</taxon>
        <taxon>Tracheophyta</taxon>
        <taxon>Spermatophyta</taxon>
        <taxon>Magnoliopsida</taxon>
        <taxon>eudicotyledons</taxon>
        <taxon>Gunneridae</taxon>
        <taxon>Pentapetalae</taxon>
        <taxon>rosids</taxon>
        <taxon>fabids</taxon>
        <taxon>Fabales</taxon>
        <taxon>Fabaceae</taxon>
        <taxon>Papilionoideae</taxon>
        <taxon>50 kb inversion clade</taxon>
        <taxon>NPAAA clade</taxon>
        <taxon>Hologalegina</taxon>
        <taxon>IRL clade</taxon>
        <taxon>Cicereae</taxon>
        <taxon>Cicer</taxon>
    </lineage>
</organism>
<feature type="chain" id="PRO_0000168083" description="Lactoylglutathione lyase">
    <location>
        <begin position="1"/>
        <end position="186"/>
    </location>
</feature>
<feature type="domain" description="VOC" evidence="2">
    <location>
        <begin position="28"/>
        <end position="175"/>
    </location>
</feature>
<feature type="active site" description="Proton donor/acceptor" evidence="1">
    <location>
        <position position="171"/>
    </location>
</feature>
<feature type="binding site" evidence="1">
    <location>
        <position position="31"/>
    </location>
    <ligand>
        <name>substrate</name>
    </ligand>
</feature>
<feature type="binding site" evidence="1">
    <location>
        <position position="31"/>
    </location>
    <ligand>
        <name>Zn(2+)</name>
        <dbReference type="ChEBI" id="CHEBI:29105"/>
    </ligand>
</feature>
<feature type="binding site" evidence="1">
    <location>
        <position position="35"/>
    </location>
    <ligand>
        <name>substrate</name>
    </ligand>
</feature>
<feature type="binding site" evidence="1">
    <location>
        <position position="97"/>
    </location>
    <ligand>
        <name>Zn(2+)</name>
        <dbReference type="ChEBI" id="CHEBI:29105"/>
    </ligand>
</feature>
<feature type="binding site" evidence="1">
    <location>
        <position position="101"/>
    </location>
    <ligand>
        <name>substrate</name>
    </ligand>
</feature>
<feature type="binding site" evidence="1">
    <location>
        <position position="121"/>
    </location>
    <ligand>
        <name>substrate</name>
    </ligand>
</feature>
<feature type="binding site" evidence="1">
    <location>
        <position position="125"/>
    </location>
    <ligand>
        <name>substrate</name>
    </ligand>
</feature>
<feature type="binding site" evidence="1">
    <location>
        <position position="125"/>
    </location>
    <ligand>
        <name>Zn(2+)</name>
        <dbReference type="ChEBI" id="CHEBI:29105"/>
    </ligand>
</feature>
<feature type="binding site" evidence="1">
    <location>
        <begin position="155"/>
        <end position="156"/>
    </location>
    <ligand>
        <name>substrate</name>
    </ligand>
</feature>
<feature type="binding site" evidence="1">
    <location>
        <position position="171"/>
    </location>
    <ligand>
        <name>Zn(2+)</name>
        <dbReference type="ChEBI" id="CHEBI:29105"/>
    </ligand>
</feature>
<dbReference type="EC" id="4.4.1.5"/>
<dbReference type="EMBL" id="AJ224520">
    <property type="protein sequence ID" value="CAA12028.1"/>
    <property type="molecule type" value="mRNA"/>
</dbReference>
<dbReference type="RefSeq" id="NP_001351704.1">
    <property type="nucleotide sequence ID" value="NM_001364775.1"/>
</dbReference>
<dbReference type="RefSeq" id="XP_004506056.1">
    <property type="nucleotide sequence ID" value="XM_004505999.1"/>
</dbReference>
<dbReference type="SMR" id="O49818"/>
<dbReference type="STRING" id="3827.O49818"/>
<dbReference type="PaxDb" id="3827-XP_004506055.1"/>
<dbReference type="GeneID" id="101505694"/>
<dbReference type="KEGG" id="cam:101505694"/>
<dbReference type="eggNOG" id="KOG2944">
    <property type="taxonomic scope" value="Eukaryota"/>
</dbReference>
<dbReference type="UniPathway" id="UPA00619">
    <property type="reaction ID" value="UER00675"/>
</dbReference>
<dbReference type="Proteomes" id="UP000087171">
    <property type="component" value="Chromosome Ca6"/>
</dbReference>
<dbReference type="GO" id="GO:0004462">
    <property type="term" value="F:lactoylglutathione lyase activity"/>
    <property type="evidence" value="ECO:0007669"/>
    <property type="project" value="UniProtKB-EC"/>
</dbReference>
<dbReference type="GO" id="GO:0046872">
    <property type="term" value="F:metal ion binding"/>
    <property type="evidence" value="ECO:0007669"/>
    <property type="project" value="UniProtKB-KW"/>
</dbReference>
<dbReference type="CDD" id="cd07233">
    <property type="entry name" value="GlxI_Zn"/>
    <property type="match status" value="1"/>
</dbReference>
<dbReference type="FunFam" id="3.10.180.10:FF:000011">
    <property type="entry name" value="Lactoylglutathione lyase"/>
    <property type="match status" value="1"/>
</dbReference>
<dbReference type="Gene3D" id="3.10.180.10">
    <property type="entry name" value="2,3-Dihydroxybiphenyl 1,2-Dioxygenase, domain 1"/>
    <property type="match status" value="1"/>
</dbReference>
<dbReference type="InterPro" id="IPR029068">
    <property type="entry name" value="Glyas_Bleomycin-R_OHBP_Dase"/>
</dbReference>
<dbReference type="InterPro" id="IPR004360">
    <property type="entry name" value="Glyas_Fos-R_dOase_dom"/>
</dbReference>
<dbReference type="InterPro" id="IPR004361">
    <property type="entry name" value="Glyoxalase_1"/>
</dbReference>
<dbReference type="InterPro" id="IPR018146">
    <property type="entry name" value="Glyoxalase_1_CS"/>
</dbReference>
<dbReference type="InterPro" id="IPR037523">
    <property type="entry name" value="VOC"/>
</dbReference>
<dbReference type="NCBIfam" id="TIGR00068">
    <property type="entry name" value="glyox_I"/>
    <property type="match status" value="1"/>
</dbReference>
<dbReference type="PANTHER" id="PTHR10374:SF30">
    <property type="entry name" value="LACTOYLGLUTATHIONE LYASE"/>
    <property type="match status" value="1"/>
</dbReference>
<dbReference type="PANTHER" id="PTHR10374">
    <property type="entry name" value="LACTOYLGLUTATHIONE LYASE GLYOXALASE I"/>
    <property type="match status" value="1"/>
</dbReference>
<dbReference type="Pfam" id="PF00903">
    <property type="entry name" value="Glyoxalase"/>
    <property type="match status" value="1"/>
</dbReference>
<dbReference type="SUPFAM" id="SSF54593">
    <property type="entry name" value="Glyoxalase/Bleomycin resistance protein/Dihydroxybiphenyl dioxygenase"/>
    <property type="match status" value="1"/>
</dbReference>
<dbReference type="PROSITE" id="PS00934">
    <property type="entry name" value="GLYOXALASE_I_1"/>
    <property type="match status" value="1"/>
</dbReference>
<dbReference type="PROSITE" id="PS00935">
    <property type="entry name" value="GLYOXALASE_I_2"/>
    <property type="match status" value="1"/>
</dbReference>
<dbReference type="PROSITE" id="PS51819">
    <property type="entry name" value="VOC"/>
    <property type="match status" value="1"/>
</dbReference>
<comment type="function">
    <text evidence="1">Catalyzes the conversion of hemimercaptal, formed from methylglyoxal and glutathione, to S-lactoylglutathione.</text>
</comment>
<comment type="catalytic activity">
    <reaction>
        <text>(R)-S-lactoylglutathione = methylglyoxal + glutathione</text>
        <dbReference type="Rhea" id="RHEA:19069"/>
        <dbReference type="ChEBI" id="CHEBI:17158"/>
        <dbReference type="ChEBI" id="CHEBI:57474"/>
        <dbReference type="ChEBI" id="CHEBI:57925"/>
        <dbReference type="EC" id="4.4.1.5"/>
    </reaction>
</comment>
<comment type="cofactor">
    <cofactor evidence="1">
        <name>Zn(2+)</name>
        <dbReference type="ChEBI" id="CHEBI:29105"/>
    </cofactor>
    <text evidence="1">Binds 1 zinc ion per subunit.</text>
</comment>
<comment type="pathway">
    <text>Secondary metabolite metabolism; methylglyoxal degradation; (R)-lactate from methylglyoxal: step 1/2.</text>
</comment>
<comment type="similarity">
    <text evidence="3">Belongs to the glyoxalase I family.</text>
</comment>
<reference key="1">
    <citation type="online journal article" date="1998" name="Plant Gene Register">
        <title>Isolation and characterization of a cDNA encoding a glyoxalase-I from Cicer arietinum L. Epicotyls upregulated by stress.</title>
        <authorList>
            <person name="Romo S."/>
            <person name="Labrador E."/>
            <person name="Dopico B."/>
        </authorList>
        <locator>PGR98-074</locator>
    </citation>
    <scope>NUCLEOTIDE SEQUENCE [MRNA]</scope>
    <source>
        <strain>cv. Castellana</strain>
    </source>
</reference>
<keyword id="KW-0456">Lyase</keyword>
<keyword id="KW-0479">Metal-binding</keyword>
<keyword id="KW-1185">Reference proteome</keyword>
<keyword id="KW-0862">Zinc</keyword>
<protein>
    <recommendedName>
        <fullName>Lactoylglutathione lyase</fullName>
        <ecNumber>4.4.1.5</ecNumber>
    </recommendedName>
    <alternativeName>
        <fullName>Aldoketomutase</fullName>
    </alternativeName>
    <alternativeName>
        <fullName>Glyoxalase I</fullName>
        <shortName>Glx I</shortName>
    </alternativeName>
    <alternativeName>
        <fullName>Ketone-aldehyde mutase</fullName>
    </alternativeName>
    <alternativeName>
        <fullName>Methylglyoxalase</fullName>
    </alternativeName>
    <alternativeName>
        <fullName>S-D-lactoylglutathione methylglyoxal lyase</fullName>
    </alternativeName>
</protein>
<accession>O49818</accession>
<evidence type="ECO:0000250" key="1"/>
<evidence type="ECO:0000255" key="2">
    <source>
        <dbReference type="PROSITE-ProRule" id="PRU01163"/>
    </source>
</evidence>
<evidence type="ECO:0000305" key="3"/>